<keyword id="KW-0145">Chemotaxis</keyword>
<keyword id="KW-0963">Cytoplasm</keyword>
<keyword id="KW-0378">Hydrolase</keyword>
<keyword id="KW-0597">Phosphoprotein</keyword>
<keyword id="KW-1185">Reference proteome</keyword>
<proteinExistence type="inferred from homology"/>
<name>CHEB_HALSA</name>
<sequence>MTEALVVDDSHFMRTVISDILEDGGVDVVGTAENGARALDAVTDVQPDVITMDVEMPEMDGIEATAEIMREQPTPILMVSALTTEDADATLEAMEKGAIDTFAKPGGTISTELSGHSEELVAAVERVASADPTAGHDVEMEPASPPDATTSEYADNPTLLIGASTGGPNVVESILASLPAEADFRVLIVQHMPDQFTSRFADRLDAASQYDITEAEDGSRIGGGEGLVARGDYHMRVSGYSNGRLRVRLDQSERLHSVRPAIDVTFKSAAERVTDPLVSVVLTGMGSDGADGVRAVKDAGGATLAQNEATSAVFGIPERAIETGCVDDVLPVDQLTEAIADSIRRTT</sequence>
<accession>P0DMI2</accession>
<accession>Q48300</accession>
<accession>Q9HQW6</accession>
<gene>
    <name evidence="1" type="primary">cheB</name>
    <name type="ordered locus">VNG_0973G</name>
</gene>
<evidence type="ECO:0000255" key="1">
    <source>
        <dbReference type="HAMAP-Rule" id="MF_00099"/>
    </source>
</evidence>
<evidence type="ECO:0000256" key="2">
    <source>
        <dbReference type="SAM" id="MobiDB-lite"/>
    </source>
</evidence>
<dbReference type="EC" id="3.1.1.61" evidence="1"/>
<dbReference type="EC" id="3.5.1.44" evidence="1"/>
<dbReference type="EMBL" id="AE004437">
    <property type="protein sequence ID" value="AAG19394.1"/>
    <property type="molecule type" value="Genomic_DNA"/>
</dbReference>
<dbReference type="PIR" id="F84253">
    <property type="entry name" value="F84253"/>
</dbReference>
<dbReference type="RefSeq" id="WP_010902691.1">
    <property type="nucleotide sequence ID" value="NC_002607.1"/>
</dbReference>
<dbReference type="SMR" id="P0DMI2"/>
<dbReference type="STRING" id="64091.VNG_0973G"/>
<dbReference type="PaxDb" id="64091-VNG_0973G"/>
<dbReference type="GeneID" id="68693777"/>
<dbReference type="KEGG" id="hal:VNG_0973G"/>
<dbReference type="PATRIC" id="fig|64091.14.peg.749"/>
<dbReference type="HOGENOM" id="CLU_000445_51_0_2"/>
<dbReference type="InParanoid" id="P0DMI2"/>
<dbReference type="OrthoDB" id="2857at2157"/>
<dbReference type="PhylomeDB" id="P0DMI2"/>
<dbReference type="Proteomes" id="UP000000554">
    <property type="component" value="Chromosome"/>
</dbReference>
<dbReference type="GO" id="GO:0005737">
    <property type="term" value="C:cytoplasm"/>
    <property type="evidence" value="ECO:0007669"/>
    <property type="project" value="UniProtKB-SubCell"/>
</dbReference>
<dbReference type="GO" id="GO:0000156">
    <property type="term" value="F:phosphorelay response regulator activity"/>
    <property type="evidence" value="ECO:0007669"/>
    <property type="project" value="InterPro"/>
</dbReference>
<dbReference type="GO" id="GO:0008984">
    <property type="term" value="F:protein-glutamate methylesterase activity"/>
    <property type="evidence" value="ECO:0007669"/>
    <property type="project" value="UniProtKB-UniRule"/>
</dbReference>
<dbReference type="GO" id="GO:0050568">
    <property type="term" value="F:protein-glutamine glutaminase activity"/>
    <property type="evidence" value="ECO:0007669"/>
    <property type="project" value="UniProtKB-UniRule"/>
</dbReference>
<dbReference type="GO" id="GO:0006935">
    <property type="term" value="P:chemotaxis"/>
    <property type="evidence" value="ECO:0007669"/>
    <property type="project" value="UniProtKB-UniRule"/>
</dbReference>
<dbReference type="CDD" id="cd16432">
    <property type="entry name" value="CheB_Rec"/>
    <property type="match status" value="1"/>
</dbReference>
<dbReference type="CDD" id="cd17541">
    <property type="entry name" value="REC_CheB-like"/>
    <property type="match status" value="1"/>
</dbReference>
<dbReference type="Gene3D" id="3.40.50.2300">
    <property type="match status" value="1"/>
</dbReference>
<dbReference type="Gene3D" id="3.40.50.180">
    <property type="entry name" value="Methylesterase CheB, C-terminal domain"/>
    <property type="match status" value="1"/>
</dbReference>
<dbReference type="HAMAP" id="MF_00099">
    <property type="entry name" value="CheB_chemtxs"/>
    <property type="match status" value="1"/>
</dbReference>
<dbReference type="InterPro" id="IPR008248">
    <property type="entry name" value="CheB-like"/>
</dbReference>
<dbReference type="InterPro" id="IPR035909">
    <property type="entry name" value="CheB_C"/>
</dbReference>
<dbReference type="InterPro" id="IPR011006">
    <property type="entry name" value="CheY-like_superfamily"/>
</dbReference>
<dbReference type="InterPro" id="IPR000673">
    <property type="entry name" value="Sig_transdc_resp-reg_Me-estase"/>
</dbReference>
<dbReference type="InterPro" id="IPR001789">
    <property type="entry name" value="Sig_transdc_resp-reg_receiver"/>
</dbReference>
<dbReference type="NCBIfam" id="NF001965">
    <property type="entry name" value="PRK00742.1"/>
    <property type="match status" value="1"/>
</dbReference>
<dbReference type="PANTHER" id="PTHR42872">
    <property type="entry name" value="PROTEIN-GLUTAMATE METHYLESTERASE/PROTEIN-GLUTAMINE GLUTAMINASE"/>
    <property type="match status" value="1"/>
</dbReference>
<dbReference type="PANTHER" id="PTHR42872:SF6">
    <property type="entry name" value="PROTEIN-GLUTAMATE METHYLESTERASE_PROTEIN-GLUTAMINE GLUTAMINASE"/>
    <property type="match status" value="1"/>
</dbReference>
<dbReference type="Pfam" id="PF01339">
    <property type="entry name" value="CheB_methylest"/>
    <property type="match status" value="1"/>
</dbReference>
<dbReference type="Pfam" id="PF00072">
    <property type="entry name" value="Response_reg"/>
    <property type="match status" value="1"/>
</dbReference>
<dbReference type="PIRSF" id="PIRSF000876">
    <property type="entry name" value="RR_chemtxs_CheB"/>
    <property type="match status" value="1"/>
</dbReference>
<dbReference type="SMART" id="SM00448">
    <property type="entry name" value="REC"/>
    <property type="match status" value="1"/>
</dbReference>
<dbReference type="SUPFAM" id="SSF52172">
    <property type="entry name" value="CheY-like"/>
    <property type="match status" value="1"/>
</dbReference>
<dbReference type="SUPFAM" id="SSF52738">
    <property type="entry name" value="Methylesterase CheB, C-terminal domain"/>
    <property type="match status" value="1"/>
</dbReference>
<dbReference type="PROSITE" id="PS50122">
    <property type="entry name" value="CHEB"/>
    <property type="match status" value="1"/>
</dbReference>
<dbReference type="PROSITE" id="PS50110">
    <property type="entry name" value="RESPONSE_REGULATORY"/>
    <property type="match status" value="1"/>
</dbReference>
<reference key="1">
    <citation type="journal article" date="2000" name="Proc. Natl. Acad. Sci. U.S.A.">
        <title>Genome sequence of Halobacterium species NRC-1.</title>
        <authorList>
            <person name="Ng W.V."/>
            <person name="Kennedy S.P."/>
            <person name="Mahairas G.G."/>
            <person name="Berquist B."/>
            <person name="Pan M."/>
            <person name="Shukla H.D."/>
            <person name="Lasky S.R."/>
            <person name="Baliga N.S."/>
            <person name="Thorsson V."/>
            <person name="Sbrogna J."/>
            <person name="Swartzell S."/>
            <person name="Weir D."/>
            <person name="Hall J."/>
            <person name="Dahl T.A."/>
            <person name="Welti R."/>
            <person name="Goo Y.A."/>
            <person name="Leithauser B."/>
            <person name="Keller K."/>
            <person name="Cruz R."/>
            <person name="Danson M.J."/>
            <person name="Hough D.W."/>
            <person name="Maddocks D.G."/>
            <person name="Jablonski P.E."/>
            <person name="Krebs M.P."/>
            <person name="Angevine C.M."/>
            <person name="Dale H."/>
            <person name="Isenbarger T.A."/>
            <person name="Peck R.F."/>
            <person name="Pohlschroder M."/>
            <person name="Spudich J.L."/>
            <person name="Jung K.-H."/>
            <person name="Alam M."/>
            <person name="Freitas T."/>
            <person name="Hou S."/>
            <person name="Daniels C.J."/>
            <person name="Dennis P.P."/>
            <person name="Omer A.D."/>
            <person name="Ebhardt H."/>
            <person name="Lowe T.M."/>
            <person name="Liang P."/>
            <person name="Riley M."/>
            <person name="Hood L."/>
            <person name="DasSarma S."/>
        </authorList>
    </citation>
    <scope>NUCLEOTIDE SEQUENCE [LARGE SCALE GENOMIC DNA]</scope>
    <source>
        <strain>ATCC 700922 / JCM 11081 / NRC-1</strain>
    </source>
</reference>
<comment type="function">
    <text evidence="1">Involved in chemotaxis. Part of a chemotaxis signal transduction system that modulates chemotaxis in response to various stimuli. Catalyzes the demethylation of specific methylglutamate residues introduced into the chemoreceptors (methyl-accepting chemotaxis proteins or MCP) by CheR. Also mediates the irreversible deamidation of specific glutamine residues to glutamic acid.</text>
</comment>
<comment type="catalytic activity">
    <reaction evidence="1">
        <text>[protein]-L-glutamate 5-O-methyl ester + H2O = L-glutamyl-[protein] + methanol + H(+)</text>
        <dbReference type="Rhea" id="RHEA:23236"/>
        <dbReference type="Rhea" id="RHEA-COMP:10208"/>
        <dbReference type="Rhea" id="RHEA-COMP:10311"/>
        <dbReference type="ChEBI" id="CHEBI:15377"/>
        <dbReference type="ChEBI" id="CHEBI:15378"/>
        <dbReference type="ChEBI" id="CHEBI:17790"/>
        <dbReference type="ChEBI" id="CHEBI:29973"/>
        <dbReference type="ChEBI" id="CHEBI:82795"/>
        <dbReference type="EC" id="3.1.1.61"/>
    </reaction>
</comment>
<comment type="catalytic activity">
    <reaction evidence="1">
        <text>L-glutaminyl-[protein] + H2O = L-glutamyl-[protein] + NH4(+)</text>
        <dbReference type="Rhea" id="RHEA:16441"/>
        <dbReference type="Rhea" id="RHEA-COMP:10207"/>
        <dbReference type="Rhea" id="RHEA-COMP:10208"/>
        <dbReference type="ChEBI" id="CHEBI:15377"/>
        <dbReference type="ChEBI" id="CHEBI:28938"/>
        <dbReference type="ChEBI" id="CHEBI:29973"/>
        <dbReference type="ChEBI" id="CHEBI:30011"/>
        <dbReference type="EC" id="3.5.1.44"/>
    </reaction>
</comment>
<comment type="subcellular location">
    <subcellularLocation>
        <location evidence="1">Cytoplasm</location>
    </subcellularLocation>
</comment>
<comment type="domain">
    <text evidence="1">Contains a C-terminal catalytic domain, and an N-terminal region which modulates catalytic activity.</text>
</comment>
<comment type="PTM">
    <text evidence="1">Phosphorylated by CheA. Phosphorylation of the N-terminal regulatory domain activates the methylesterase activity.</text>
</comment>
<comment type="similarity">
    <text evidence="1">Belongs to the CheB family.</text>
</comment>
<protein>
    <recommendedName>
        <fullName evidence="1">Protein-glutamate methylesterase/protein-glutamine glutaminase</fullName>
        <ecNumber evidence="1">3.1.1.61</ecNumber>
        <ecNumber evidence="1">3.5.1.44</ecNumber>
    </recommendedName>
</protein>
<feature type="chain" id="PRO_0000158050" description="Protein-glutamate methylesterase/protein-glutamine glutaminase">
    <location>
        <begin position="1"/>
        <end position="347"/>
    </location>
</feature>
<feature type="domain" description="Response regulatory" evidence="1">
    <location>
        <begin position="3"/>
        <end position="119"/>
    </location>
</feature>
<feature type="domain" description="CheB-type methylesterase" evidence="1">
    <location>
        <begin position="152"/>
        <end position="346"/>
    </location>
</feature>
<feature type="region of interest" description="Disordered" evidence="2">
    <location>
        <begin position="132"/>
        <end position="154"/>
    </location>
</feature>
<feature type="active site" evidence="1">
    <location>
        <position position="164"/>
    </location>
</feature>
<feature type="active site" evidence="1">
    <location>
        <position position="191"/>
    </location>
</feature>
<feature type="active site" evidence="1">
    <location>
        <position position="288"/>
    </location>
</feature>
<feature type="modified residue" description="4-aspartylphosphate" evidence="1">
    <location>
        <position position="53"/>
    </location>
</feature>
<organism>
    <name type="scientific">Halobacterium salinarum (strain ATCC 700922 / JCM 11081 / NRC-1)</name>
    <name type="common">Halobacterium halobium</name>
    <dbReference type="NCBI Taxonomy" id="64091"/>
    <lineage>
        <taxon>Archaea</taxon>
        <taxon>Methanobacteriati</taxon>
        <taxon>Methanobacteriota</taxon>
        <taxon>Stenosarchaea group</taxon>
        <taxon>Halobacteria</taxon>
        <taxon>Halobacteriales</taxon>
        <taxon>Halobacteriaceae</taxon>
        <taxon>Halobacterium</taxon>
        <taxon>Halobacterium salinarum NRC-34001</taxon>
    </lineage>
</organism>